<reference key="1">
    <citation type="journal article" date="2004" name="PLoS Biol.">
        <title>Genomic insights into methanotrophy: the complete genome sequence of Methylococcus capsulatus (Bath).</title>
        <authorList>
            <person name="Ward N.L."/>
            <person name="Larsen O."/>
            <person name="Sakwa J."/>
            <person name="Bruseth L."/>
            <person name="Khouri H.M."/>
            <person name="Durkin A.S."/>
            <person name="Dimitrov G."/>
            <person name="Jiang L."/>
            <person name="Scanlan D."/>
            <person name="Kang K.H."/>
            <person name="Lewis M.R."/>
            <person name="Nelson K.E."/>
            <person name="Methe B.A."/>
            <person name="Wu M."/>
            <person name="Heidelberg J.F."/>
            <person name="Paulsen I.T."/>
            <person name="Fouts D.E."/>
            <person name="Ravel J."/>
            <person name="Tettelin H."/>
            <person name="Ren Q."/>
            <person name="Read T.D."/>
            <person name="DeBoy R.T."/>
            <person name="Seshadri R."/>
            <person name="Salzberg S.L."/>
            <person name="Jensen H.B."/>
            <person name="Birkeland N.K."/>
            <person name="Nelson W.C."/>
            <person name="Dodson R.J."/>
            <person name="Grindhaug S.H."/>
            <person name="Holt I.E."/>
            <person name="Eidhammer I."/>
            <person name="Jonasen I."/>
            <person name="Vanaken S."/>
            <person name="Utterback T.R."/>
            <person name="Feldblyum T.V."/>
            <person name="Fraser C.M."/>
            <person name="Lillehaug J.R."/>
            <person name="Eisen J.A."/>
        </authorList>
    </citation>
    <scope>NUCLEOTIDE SEQUENCE [LARGE SCALE GENOMIC DNA]</scope>
    <source>
        <strain>ATCC 33009 / NCIMB 11132 / Bath</strain>
    </source>
</reference>
<proteinExistence type="inferred from homology"/>
<sequence>MVGSFVFEAELRHQLGKGASRRLRHAGKVPAVLYGGGGEPVSLLLDHHKVVKNLENEATYSHVLTIRFDGREENAILKAVQRHPAKPVVMHLDFQRVSAADKIRVHVPLHFINQESSVGVKKGGVVSHGMVDVEVDCLPKDLPEYIEVDLAQVDIGGIIHLSDLKLPAGVEIHALAQGVGHDLPVASVHAPRTAEGGEGGAG</sequence>
<dbReference type="EMBL" id="AE017282">
    <property type="protein sequence ID" value="AAU92700.1"/>
    <property type="molecule type" value="Genomic_DNA"/>
</dbReference>
<dbReference type="RefSeq" id="WP_010960357.1">
    <property type="nucleotide sequence ID" value="NC_002977.6"/>
</dbReference>
<dbReference type="SMR" id="Q60A15"/>
<dbReference type="STRING" id="243233.MCA1057"/>
<dbReference type="GeneID" id="88223350"/>
<dbReference type="KEGG" id="mca:MCA1057"/>
<dbReference type="eggNOG" id="COG1825">
    <property type="taxonomic scope" value="Bacteria"/>
</dbReference>
<dbReference type="HOGENOM" id="CLU_075939_0_1_6"/>
<dbReference type="Proteomes" id="UP000006821">
    <property type="component" value="Chromosome"/>
</dbReference>
<dbReference type="GO" id="GO:0022625">
    <property type="term" value="C:cytosolic large ribosomal subunit"/>
    <property type="evidence" value="ECO:0007669"/>
    <property type="project" value="TreeGrafter"/>
</dbReference>
<dbReference type="GO" id="GO:0008097">
    <property type="term" value="F:5S rRNA binding"/>
    <property type="evidence" value="ECO:0007669"/>
    <property type="project" value="InterPro"/>
</dbReference>
<dbReference type="GO" id="GO:0003735">
    <property type="term" value="F:structural constituent of ribosome"/>
    <property type="evidence" value="ECO:0007669"/>
    <property type="project" value="InterPro"/>
</dbReference>
<dbReference type="GO" id="GO:0006412">
    <property type="term" value="P:translation"/>
    <property type="evidence" value="ECO:0007669"/>
    <property type="project" value="UniProtKB-UniRule"/>
</dbReference>
<dbReference type="CDD" id="cd00495">
    <property type="entry name" value="Ribosomal_L25_TL5_CTC"/>
    <property type="match status" value="1"/>
</dbReference>
<dbReference type="FunFam" id="2.170.120.20:FF:000003">
    <property type="entry name" value="50S ribosomal protein L25"/>
    <property type="match status" value="1"/>
</dbReference>
<dbReference type="FunFam" id="2.40.240.10:FF:000002">
    <property type="entry name" value="50S ribosomal protein L25"/>
    <property type="match status" value="1"/>
</dbReference>
<dbReference type="Gene3D" id="2.170.120.20">
    <property type="entry name" value="Ribosomal protein L25, beta domain"/>
    <property type="match status" value="1"/>
</dbReference>
<dbReference type="Gene3D" id="2.40.240.10">
    <property type="entry name" value="Ribosomal Protein L25, Chain P"/>
    <property type="match status" value="1"/>
</dbReference>
<dbReference type="HAMAP" id="MF_01336">
    <property type="entry name" value="Ribosomal_bL25"/>
    <property type="match status" value="1"/>
</dbReference>
<dbReference type="HAMAP" id="MF_01334">
    <property type="entry name" value="Ribosomal_bL25_CTC"/>
    <property type="match status" value="1"/>
</dbReference>
<dbReference type="InterPro" id="IPR020056">
    <property type="entry name" value="Rbsml_bL25/Gln-tRNA_synth_N"/>
</dbReference>
<dbReference type="InterPro" id="IPR011035">
    <property type="entry name" value="Ribosomal_bL25/Gln-tRNA_synth"/>
</dbReference>
<dbReference type="InterPro" id="IPR020057">
    <property type="entry name" value="Ribosomal_bL25_b-dom"/>
</dbReference>
<dbReference type="InterPro" id="IPR037121">
    <property type="entry name" value="Ribosomal_bL25_C"/>
</dbReference>
<dbReference type="InterPro" id="IPR001021">
    <property type="entry name" value="Ribosomal_bL25_long"/>
</dbReference>
<dbReference type="InterPro" id="IPR020055">
    <property type="entry name" value="Ribosomal_bL25_short"/>
</dbReference>
<dbReference type="InterPro" id="IPR029751">
    <property type="entry name" value="Ribosomal_L25_dom"/>
</dbReference>
<dbReference type="InterPro" id="IPR020930">
    <property type="entry name" value="Ribosomal_uL5_bac-type"/>
</dbReference>
<dbReference type="NCBIfam" id="TIGR00731">
    <property type="entry name" value="bL25_bact_ctc"/>
    <property type="match status" value="1"/>
</dbReference>
<dbReference type="NCBIfam" id="NF004128">
    <property type="entry name" value="PRK05618.1-2"/>
    <property type="match status" value="1"/>
</dbReference>
<dbReference type="NCBIfam" id="NF004130">
    <property type="entry name" value="PRK05618.1-5"/>
    <property type="match status" value="1"/>
</dbReference>
<dbReference type="NCBIfam" id="NF004612">
    <property type="entry name" value="PRK05943.1"/>
    <property type="match status" value="1"/>
</dbReference>
<dbReference type="PANTHER" id="PTHR33284">
    <property type="entry name" value="RIBOSOMAL PROTEIN L25/GLN-TRNA SYNTHETASE, ANTI-CODON-BINDING DOMAIN-CONTAINING PROTEIN"/>
    <property type="match status" value="1"/>
</dbReference>
<dbReference type="PANTHER" id="PTHR33284:SF1">
    <property type="entry name" value="RIBOSOMAL PROTEIN L25_GLN-TRNA SYNTHETASE, ANTI-CODON-BINDING DOMAIN-CONTAINING PROTEIN"/>
    <property type="match status" value="1"/>
</dbReference>
<dbReference type="Pfam" id="PF01386">
    <property type="entry name" value="Ribosomal_L25p"/>
    <property type="match status" value="1"/>
</dbReference>
<dbReference type="Pfam" id="PF14693">
    <property type="entry name" value="Ribosomal_TL5_C"/>
    <property type="match status" value="1"/>
</dbReference>
<dbReference type="SUPFAM" id="SSF50715">
    <property type="entry name" value="Ribosomal protein L25-like"/>
    <property type="match status" value="1"/>
</dbReference>
<organism>
    <name type="scientific">Methylococcus capsulatus (strain ATCC 33009 / NCIMB 11132 / Bath)</name>
    <dbReference type="NCBI Taxonomy" id="243233"/>
    <lineage>
        <taxon>Bacteria</taxon>
        <taxon>Pseudomonadati</taxon>
        <taxon>Pseudomonadota</taxon>
        <taxon>Gammaproteobacteria</taxon>
        <taxon>Methylococcales</taxon>
        <taxon>Methylococcaceae</taxon>
        <taxon>Methylococcus</taxon>
    </lineage>
</organism>
<accession>Q60A15</accession>
<name>RL25_METCA</name>
<keyword id="KW-1185">Reference proteome</keyword>
<keyword id="KW-0687">Ribonucleoprotein</keyword>
<keyword id="KW-0689">Ribosomal protein</keyword>
<keyword id="KW-0694">RNA-binding</keyword>
<keyword id="KW-0699">rRNA-binding</keyword>
<feature type="chain" id="PRO_0000181566" description="Large ribosomal subunit protein bL25">
    <location>
        <begin position="1"/>
        <end position="202"/>
    </location>
</feature>
<gene>
    <name evidence="1" type="primary">rplY</name>
    <name evidence="1" type="synonym">ctc</name>
    <name type="ordered locus">MCA1057</name>
</gene>
<comment type="function">
    <text evidence="1">This is one of the proteins that binds to the 5S RNA in the ribosome where it forms part of the central protuberance.</text>
</comment>
<comment type="subunit">
    <text evidence="1">Part of the 50S ribosomal subunit; part of the 5S rRNA/L5/L18/L25 subcomplex. Contacts the 5S rRNA. Binds to the 5S rRNA independently of L5 and L18.</text>
</comment>
<comment type="similarity">
    <text evidence="1">Belongs to the bacterial ribosomal protein bL25 family. CTC subfamily.</text>
</comment>
<evidence type="ECO:0000255" key="1">
    <source>
        <dbReference type="HAMAP-Rule" id="MF_01334"/>
    </source>
</evidence>
<evidence type="ECO:0000305" key="2"/>
<protein>
    <recommendedName>
        <fullName evidence="1">Large ribosomal subunit protein bL25</fullName>
    </recommendedName>
    <alternativeName>
        <fullName evidence="2">50S ribosomal protein L25</fullName>
    </alternativeName>
    <alternativeName>
        <fullName evidence="1">General stress protein CTC</fullName>
    </alternativeName>
</protein>